<keyword id="KW-0131">Cell cycle</keyword>
<keyword id="KW-0132">Cell division</keyword>
<keyword id="KW-0963">Cytoplasm</keyword>
<keyword id="KW-0342">GTP-binding</keyword>
<keyword id="KW-0547">Nucleotide-binding</keyword>
<keyword id="KW-0717">Septation</keyword>
<sequence length="398" mass="42497">MSIDLSLPELPILHPRITVVGVGGAGGNAVNNMIQSNLQGVNFVVANTDAQALEKSLCDKKIQLGINLTKGLGAGALPDVGKGAAEESIDEIMEHIKDSHMLFITAGMGGGTGTGAAPVIAKAAREARAAVKDRAPKEKKILTVGVVTKPFGFEGVRRMPIAELGLEELQKYVDTLIVIPNQNLFRIANEKTTFSDAFKLADNVLHIGIRGVTDLMVMPGLINLDFADIETVMSEMGKAMIGTGEAEGEDRAISAAEAAISNPLLDNVSMKGAQGILINITGGGDMTLFEVDAAANRVREEVDENANIIFGATFDQAMEGRVRVSVLATGIDGRNNKSETSPISQSEDSEKEKFKWPYSQSESTQDKTLETKPAEQVSEGAKWGSNIYDIPAYLRRKK</sequence>
<organism>
    <name type="scientific">Wolbachia sp</name>
    <dbReference type="NCBI Taxonomy" id="956"/>
    <lineage>
        <taxon>Bacteria</taxon>
        <taxon>Pseudomonadati</taxon>
        <taxon>Pseudomonadota</taxon>
        <taxon>Alphaproteobacteria</taxon>
        <taxon>Rickettsiales</taxon>
        <taxon>Anaplasmataceae</taxon>
        <taxon>Wolbachieae</taxon>
        <taxon>Wolbachia</taxon>
    </lineage>
</organism>
<comment type="function">
    <text evidence="1">Essential cell division protein that forms a contractile ring structure (Z ring) at the future cell division site. The regulation of the ring assembly controls the timing and the location of cell division. One of the functions of the FtsZ ring is to recruit other cell division proteins to the septum to produce a new cell wall between the dividing cells. Binds GTP and shows GTPase activity.</text>
</comment>
<comment type="subunit">
    <text evidence="1">Homodimer. Polymerizes to form a dynamic ring structure in a strictly GTP-dependent manner. Interacts directly with several other division proteins.</text>
</comment>
<comment type="subcellular location">
    <subcellularLocation>
        <location evidence="1">Cytoplasm</location>
    </subcellularLocation>
    <text evidence="1">Assembles at midcell at the inner surface of the cytoplasmic membrane.</text>
</comment>
<comment type="similarity">
    <text evidence="1">Belongs to the FtsZ family.</text>
</comment>
<evidence type="ECO:0000255" key="1">
    <source>
        <dbReference type="HAMAP-Rule" id="MF_00909"/>
    </source>
</evidence>
<evidence type="ECO:0000256" key="2">
    <source>
        <dbReference type="SAM" id="MobiDB-lite"/>
    </source>
</evidence>
<accession>P45485</accession>
<protein>
    <recommendedName>
        <fullName evidence="1">Cell division protein FtsZ</fullName>
    </recommendedName>
</protein>
<feature type="chain" id="PRO_0000114395" description="Cell division protein FtsZ">
    <location>
        <begin position="1"/>
        <end position="398"/>
    </location>
</feature>
<feature type="region of interest" description="Disordered" evidence="2">
    <location>
        <begin position="333"/>
        <end position="381"/>
    </location>
</feature>
<feature type="compositionally biased region" description="Basic and acidic residues" evidence="2">
    <location>
        <begin position="364"/>
        <end position="373"/>
    </location>
</feature>
<feature type="binding site" evidence="1">
    <location>
        <begin position="24"/>
        <end position="28"/>
    </location>
    <ligand>
        <name>GTP</name>
        <dbReference type="ChEBI" id="CHEBI:37565"/>
    </ligand>
</feature>
<feature type="binding site" evidence="1">
    <location>
        <begin position="111"/>
        <end position="113"/>
    </location>
    <ligand>
        <name>GTP</name>
        <dbReference type="ChEBI" id="CHEBI:37565"/>
    </ligand>
</feature>
<feature type="binding site" evidence="1">
    <location>
        <position position="154"/>
    </location>
    <ligand>
        <name>GTP</name>
        <dbReference type="ChEBI" id="CHEBI:37565"/>
    </ligand>
</feature>
<feature type="binding site" evidence="1">
    <location>
        <position position="158"/>
    </location>
    <ligand>
        <name>GTP</name>
        <dbReference type="ChEBI" id="CHEBI:37565"/>
    </ligand>
</feature>
<feature type="binding site" evidence="1">
    <location>
        <position position="202"/>
    </location>
    <ligand>
        <name>GTP</name>
        <dbReference type="ChEBI" id="CHEBI:37565"/>
    </ligand>
</feature>
<gene>
    <name evidence="1" type="primary">ftsZ</name>
</gene>
<reference key="1">
    <citation type="journal article" date="1993" name="Mol. Gen. Genet.">
        <title>Cloning and characterization of an ftsZ homologue from a bacterial symbiont of Drosophila melanogaster.</title>
        <authorList>
            <person name="Holden P.R."/>
            <person name="Brookfield J.F.Y."/>
            <person name="Jones P."/>
        </authorList>
    </citation>
    <scope>NUCLEOTIDE SEQUENCE [GENOMIC DNA]</scope>
</reference>
<name>FTSZ_WOLSP</name>
<dbReference type="EMBL" id="X71906">
    <property type="protein sequence ID" value="CAA50724.1"/>
    <property type="molecule type" value="Genomic_DNA"/>
</dbReference>
<dbReference type="PIR" id="S35264">
    <property type="entry name" value="S35264"/>
</dbReference>
<dbReference type="SMR" id="P45485"/>
<dbReference type="GO" id="GO:0032153">
    <property type="term" value="C:cell division site"/>
    <property type="evidence" value="ECO:0007669"/>
    <property type="project" value="UniProtKB-UniRule"/>
</dbReference>
<dbReference type="GO" id="GO:0005737">
    <property type="term" value="C:cytoplasm"/>
    <property type="evidence" value="ECO:0007669"/>
    <property type="project" value="UniProtKB-SubCell"/>
</dbReference>
<dbReference type="GO" id="GO:0005525">
    <property type="term" value="F:GTP binding"/>
    <property type="evidence" value="ECO:0000247"/>
    <property type="project" value="CACAO"/>
</dbReference>
<dbReference type="GO" id="GO:0003924">
    <property type="term" value="F:GTPase activity"/>
    <property type="evidence" value="ECO:0007669"/>
    <property type="project" value="UniProtKB-UniRule"/>
</dbReference>
<dbReference type="GO" id="GO:0000917">
    <property type="term" value="P:division septum assembly"/>
    <property type="evidence" value="ECO:0007669"/>
    <property type="project" value="UniProtKB-KW"/>
</dbReference>
<dbReference type="GO" id="GO:0043093">
    <property type="term" value="P:FtsZ-dependent cytokinesis"/>
    <property type="evidence" value="ECO:0007669"/>
    <property type="project" value="UniProtKB-UniRule"/>
</dbReference>
<dbReference type="GO" id="GO:0051258">
    <property type="term" value="P:protein polymerization"/>
    <property type="evidence" value="ECO:0007669"/>
    <property type="project" value="UniProtKB-UniRule"/>
</dbReference>
<dbReference type="CDD" id="cd02201">
    <property type="entry name" value="FtsZ_type1"/>
    <property type="match status" value="1"/>
</dbReference>
<dbReference type="FunFam" id="3.30.1330.20:FF:000011">
    <property type="entry name" value="Cell division protein FtsZ"/>
    <property type="match status" value="1"/>
</dbReference>
<dbReference type="FunFam" id="3.40.50.1440:FF:000001">
    <property type="entry name" value="Cell division protein FtsZ"/>
    <property type="match status" value="1"/>
</dbReference>
<dbReference type="Gene3D" id="3.30.1330.20">
    <property type="entry name" value="Tubulin/FtsZ, C-terminal domain"/>
    <property type="match status" value="1"/>
</dbReference>
<dbReference type="Gene3D" id="3.40.50.1440">
    <property type="entry name" value="Tubulin/FtsZ, GTPase domain"/>
    <property type="match status" value="1"/>
</dbReference>
<dbReference type="HAMAP" id="MF_00909">
    <property type="entry name" value="FtsZ"/>
    <property type="match status" value="1"/>
</dbReference>
<dbReference type="InterPro" id="IPR000158">
    <property type="entry name" value="Cell_div_FtsZ"/>
</dbReference>
<dbReference type="InterPro" id="IPR020805">
    <property type="entry name" value="Cell_div_FtsZ_CS"/>
</dbReference>
<dbReference type="InterPro" id="IPR045061">
    <property type="entry name" value="FtsZ/CetZ"/>
</dbReference>
<dbReference type="InterPro" id="IPR024757">
    <property type="entry name" value="FtsZ_C"/>
</dbReference>
<dbReference type="InterPro" id="IPR008280">
    <property type="entry name" value="Tub_FtsZ_C"/>
</dbReference>
<dbReference type="InterPro" id="IPR037103">
    <property type="entry name" value="Tubulin/FtsZ-like_C"/>
</dbReference>
<dbReference type="InterPro" id="IPR018316">
    <property type="entry name" value="Tubulin/FtsZ_2-layer-sand-dom"/>
</dbReference>
<dbReference type="InterPro" id="IPR036525">
    <property type="entry name" value="Tubulin/FtsZ_GTPase_sf"/>
</dbReference>
<dbReference type="InterPro" id="IPR003008">
    <property type="entry name" value="Tubulin_FtsZ_GTPase"/>
</dbReference>
<dbReference type="NCBIfam" id="TIGR00065">
    <property type="entry name" value="ftsZ"/>
    <property type="match status" value="1"/>
</dbReference>
<dbReference type="PANTHER" id="PTHR30314">
    <property type="entry name" value="CELL DIVISION PROTEIN FTSZ-RELATED"/>
    <property type="match status" value="1"/>
</dbReference>
<dbReference type="PANTHER" id="PTHR30314:SF3">
    <property type="entry name" value="MITOCHONDRIAL DIVISION PROTEIN FSZA"/>
    <property type="match status" value="1"/>
</dbReference>
<dbReference type="Pfam" id="PF12327">
    <property type="entry name" value="FtsZ_C"/>
    <property type="match status" value="1"/>
</dbReference>
<dbReference type="Pfam" id="PF00091">
    <property type="entry name" value="Tubulin"/>
    <property type="match status" value="1"/>
</dbReference>
<dbReference type="PRINTS" id="PR00423">
    <property type="entry name" value="CELLDVISFTSZ"/>
</dbReference>
<dbReference type="SMART" id="SM00864">
    <property type="entry name" value="Tubulin"/>
    <property type="match status" value="1"/>
</dbReference>
<dbReference type="SMART" id="SM00865">
    <property type="entry name" value="Tubulin_C"/>
    <property type="match status" value="1"/>
</dbReference>
<dbReference type="SUPFAM" id="SSF55307">
    <property type="entry name" value="Tubulin C-terminal domain-like"/>
    <property type="match status" value="1"/>
</dbReference>
<dbReference type="SUPFAM" id="SSF52490">
    <property type="entry name" value="Tubulin nucleotide-binding domain-like"/>
    <property type="match status" value="1"/>
</dbReference>
<dbReference type="PROSITE" id="PS01134">
    <property type="entry name" value="FTSZ_1"/>
    <property type="match status" value="1"/>
</dbReference>
<dbReference type="PROSITE" id="PS01135">
    <property type="entry name" value="FTSZ_2"/>
    <property type="match status" value="1"/>
</dbReference>
<proteinExistence type="inferred from homology"/>